<organism>
    <name type="scientific">Escherichia phage Mu</name>
    <name type="common">Bacteriophage Mu</name>
    <dbReference type="NCBI Taxonomy" id="2681603"/>
    <lineage>
        <taxon>Viruses</taxon>
        <taxon>Duplodnaviria</taxon>
        <taxon>Heunggongvirae</taxon>
        <taxon>Uroviricota</taxon>
        <taxon>Caudoviricetes</taxon>
        <taxon>Muvirus</taxon>
        <taxon>Muvirus mu</taxon>
    </lineage>
</organism>
<dbReference type="EC" id="3.1.-.-" evidence="4"/>
<dbReference type="EMBL" id="AF083977">
    <property type="protein sequence ID" value="AAF01106.1"/>
    <property type="molecule type" value="Genomic_DNA"/>
</dbReference>
<dbReference type="RefSeq" id="NP_050632.1">
    <property type="nucleotide sequence ID" value="NC_000929.1"/>
</dbReference>
<dbReference type="GeneID" id="2636303"/>
<dbReference type="KEGG" id="vg:2636303"/>
<dbReference type="Proteomes" id="UP000002611">
    <property type="component" value="Genome"/>
</dbReference>
<dbReference type="GO" id="GO:0030430">
    <property type="term" value="C:host cell cytoplasm"/>
    <property type="evidence" value="ECO:0007669"/>
    <property type="project" value="UniProtKB-SubCell"/>
</dbReference>
<dbReference type="GO" id="GO:0004519">
    <property type="term" value="F:endonuclease activity"/>
    <property type="evidence" value="ECO:0007669"/>
    <property type="project" value="UniProtKB-KW"/>
</dbReference>
<dbReference type="GO" id="GO:0046872">
    <property type="term" value="F:metal ion binding"/>
    <property type="evidence" value="ECO:0007669"/>
    <property type="project" value="UniProtKB-KW"/>
</dbReference>
<dbReference type="GO" id="GO:0032359">
    <property type="term" value="P:provirus excision"/>
    <property type="evidence" value="ECO:0007669"/>
    <property type="project" value="UniProtKB-KW"/>
</dbReference>
<dbReference type="Gene3D" id="3.30.420.240">
    <property type="match status" value="1"/>
</dbReference>
<dbReference type="Gene3D" id="3.40.50.300">
    <property type="entry name" value="P-loop containing nucleotide triphosphate hydrolases"/>
    <property type="match status" value="1"/>
</dbReference>
<dbReference type="InterPro" id="IPR027417">
    <property type="entry name" value="P-loop_NTPase"/>
</dbReference>
<dbReference type="InterPro" id="IPR012036">
    <property type="entry name" value="Phage_Mu_Gp28"/>
</dbReference>
<dbReference type="PIRSF" id="PIRSF007056">
    <property type="entry name" value="UCP007056"/>
    <property type="match status" value="1"/>
</dbReference>
<gene>
    <name type="ordered locus">Mup28</name>
</gene>
<protein>
    <recommendedName>
        <fullName>Probable terminase, large subunit gp28</fullName>
        <ecNumber evidence="4">3.1.-.-</ecNumber>
    </recommendedName>
    <alternativeName>
        <fullName>Gene product 28</fullName>
        <shortName>gp28</shortName>
    </alternativeName>
    <alternativeName>
        <fullName>Gene product E</fullName>
        <shortName>gpE</shortName>
    </alternativeName>
    <alternativeName>
        <fullName>Pacase, large subunit</fullName>
    </alternativeName>
    <alternativeName>
        <fullName>Packaging protein E</fullName>
    </alternativeName>
</protein>
<evidence type="ECO:0000250" key="1"/>
<evidence type="ECO:0000250" key="2">
    <source>
        <dbReference type="UniProtKB" id="P17312"/>
    </source>
</evidence>
<evidence type="ECO:0000269" key="3">
    <source>
    </source>
</evidence>
<evidence type="ECO:0000305" key="4"/>
<name>TERL_BPMU</name>
<comment type="function">
    <text evidence="2">The terminase large subunit acts as an ATP driven molecular motor necessary for viral DNA translocation into empty capsids and as an endonuclease that cuts the viral genome to initiate and to end a packaging reaction. The terminase lies at a unique vertex of the procapsid and is composed of two subunits, a small terminase subunit involved in viral DNA recognition (packaging sequence), and a large terminase subunit possessing endonucleolytic and ATPase activities. Both terminase subunits heterooligomerize and are docked on the portal protein to form the packaging machine. The terminase large subunit exhibits endonuclease activity and cleaves the viral genome concatemer once the capsid is full (headful packaging). Once the capsid is packaged with the DNA, the terminase complex is substituted by neck proteins.</text>
</comment>
<comment type="cofactor">
    <cofactor evidence="2">
        <name>Mg(2+)</name>
        <dbReference type="ChEBI" id="CHEBI:18420"/>
    </cofactor>
    <text evidence="2">Binds 2 Mg(2+) ions per subunit.</text>
</comment>
<comment type="subunit">
    <text evidence="1">Interacts with the terminase small subunit gp28.</text>
</comment>
<comment type="subcellular location">
    <subcellularLocation>
        <location evidence="4">Host cytoplasm</location>
    </subcellularLocation>
</comment>
<comment type="induction">
    <text evidence="3">Expressed in the late phase of the viral replicative cycle. Expression of late genes is activated by the viral late transcription activator C.</text>
</comment>
<comment type="similarity">
    <text evidence="4">Belongs to the T4likevirus large terminase family.</text>
</comment>
<organismHost>
    <name type="scientific">Enterobacteriaceae</name>
    <dbReference type="NCBI Taxonomy" id="543"/>
</organismHost>
<sequence>MNTRENNLKALHAPRKINLREEAGLLGVDIVTDIGEAQPRNEPVFLGYQRRWFEDESQICIAEKSRRTGLTWAEAGRNVMTAAKPKRRGGRNVFYVGSRQEMALEYIAACALFARAFNQLAKADVWEQTFWDSDKKEEILTYMIRFPNSGFKIQALSSRPSNLRGLQGDVVIDEAAFHEALDELLKAAFALNMWGASVRIISTHNGVDNLFNQYIQDAREGRKDYSVHRITLDDAIADGLYRRICYVTNQPWSPEAEKAWRDGLYRNAPNKESADEEYGCIPKKSGGAYLSRVLIEAAMTPARDIPVLRFEAPDDFESLTPQMRHGIVQDWCEQELLPLLDALSPLNKHVLGEDFARRGDLTVFVPLAITPDLRKRECFRVELRNVTYDQQRQILLFILSRLPRFTGAAFDATGNGGYLAEAARLIYGPEMIDCISLTPAWYQEWMPKLKGEFEAQNITIARHQTTLDDLLHIKVDKGIPQIDKGRTKDEGGKGRRHGDFAVALCMAVRASYMNGFVIDEDSIQALPPRHRGDDVDNDDFDDYHQFERGGW</sequence>
<keyword id="KW-0255">Endonuclease</keyword>
<keyword id="KW-1035">Host cytoplasm</keyword>
<keyword id="KW-0378">Hydrolase</keyword>
<keyword id="KW-0426">Late protein</keyword>
<keyword id="KW-0460">Magnesium</keyword>
<keyword id="KW-0479">Metal-binding</keyword>
<keyword id="KW-0540">Nuclease</keyword>
<keyword id="KW-1185">Reference proteome</keyword>
<keyword id="KW-1250">Viral genome excision</keyword>
<keyword id="KW-0231">Viral genome packaging</keyword>
<keyword id="KW-1188">Viral release from host cell</keyword>
<proteinExistence type="evidence at transcript level"/>
<accession>Q9T1W6</accession>
<feature type="chain" id="PRO_0000077822" description="Probable terminase, large subunit gp28">
    <location>
        <begin position="1"/>
        <end position="551"/>
    </location>
</feature>
<reference key="1">
    <citation type="journal article" date="2002" name="J. Mol. Biol.">
        <title>Bacteriophage Mu genome sequence: analysis and comparison with Mu-like prophages in Haemophilus, Neisseria and Deinococcus.</title>
        <authorList>
            <person name="Morgan G.J."/>
            <person name="Hatfull G.F."/>
            <person name="Casjens S."/>
            <person name="Hendrix R.W."/>
        </authorList>
    </citation>
    <scope>NUCLEOTIDE SEQUENCE [LARGE SCALE GENOMIC DNA]</scope>
</reference>
<reference key="2">
    <citation type="journal article" date="1993" name="Genetics">
        <title>Mutational analysis of a C-dependent late promoter of bacteriophage Mu.</title>
        <authorList>
            <person name="Chiang L.W."/>
            <person name="Howe M.M."/>
        </authorList>
    </citation>
    <scope>INDUCTION</scope>
</reference>
<reference key="3">
    <citation type="journal article" date="2004" name="Arch. Virol.">
        <title>Characterization of Plys-proximal morphogenetic genes of transposable bacteriophage Mu.</title>
        <authorList>
            <person name="Siboo I.R."/>
            <person name="Sieder F."/>
            <person name="Kumar K."/>
            <person name="Howe M.M."/>
            <person name="DuBow M.S."/>
        </authorList>
    </citation>
    <scope>IDENTIFICATION</scope>
</reference>